<comment type="function">
    <text evidence="1">Phosphatase that hydrolyzes non-canonical purine nucleotides such as XTP and ITP to their respective diphosphate derivatives. Probably excludes non-canonical purines from DNA/RNA precursor pool, thus preventing their incorporation into DNA/RNA and avoiding chromosomal lesions.</text>
</comment>
<comment type="catalytic activity">
    <reaction evidence="1">
        <text>XTP + H2O = XDP + phosphate + H(+)</text>
        <dbReference type="Rhea" id="RHEA:28406"/>
        <dbReference type="ChEBI" id="CHEBI:15377"/>
        <dbReference type="ChEBI" id="CHEBI:15378"/>
        <dbReference type="ChEBI" id="CHEBI:43474"/>
        <dbReference type="ChEBI" id="CHEBI:59884"/>
        <dbReference type="ChEBI" id="CHEBI:61314"/>
        <dbReference type="EC" id="3.6.1.73"/>
    </reaction>
</comment>
<comment type="catalytic activity">
    <reaction evidence="1">
        <text>ITP + H2O = IDP + phosphate + H(+)</text>
        <dbReference type="Rhea" id="RHEA:28330"/>
        <dbReference type="ChEBI" id="CHEBI:15377"/>
        <dbReference type="ChEBI" id="CHEBI:15378"/>
        <dbReference type="ChEBI" id="CHEBI:43474"/>
        <dbReference type="ChEBI" id="CHEBI:58280"/>
        <dbReference type="ChEBI" id="CHEBI:61402"/>
        <dbReference type="EC" id="3.6.1.73"/>
    </reaction>
</comment>
<comment type="cofactor">
    <cofactor evidence="1">
        <name>Mg(2+)</name>
        <dbReference type="ChEBI" id="CHEBI:18420"/>
    </cofactor>
    <cofactor evidence="1">
        <name>Mn(2+)</name>
        <dbReference type="ChEBI" id="CHEBI:29035"/>
    </cofactor>
    <text evidence="1">Binds 1 divalent metal cation per subunit; can use either Mg(2+) or Mn(2+).</text>
</comment>
<comment type="subunit">
    <text evidence="1">Homodimer.</text>
</comment>
<comment type="similarity">
    <text evidence="1">Belongs to the YjjX NTPase family.</text>
</comment>
<keyword id="KW-0378">Hydrolase</keyword>
<keyword id="KW-0460">Magnesium</keyword>
<keyword id="KW-0464">Manganese</keyword>
<keyword id="KW-0479">Metal-binding</keyword>
<keyword id="KW-0546">Nucleotide metabolism</keyword>
<keyword id="KW-0547">Nucleotide-binding</keyword>
<keyword id="KW-1185">Reference proteome</keyword>
<accession>B4EY51</accession>
<organism>
    <name type="scientific">Proteus mirabilis (strain HI4320)</name>
    <dbReference type="NCBI Taxonomy" id="529507"/>
    <lineage>
        <taxon>Bacteria</taxon>
        <taxon>Pseudomonadati</taxon>
        <taxon>Pseudomonadota</taxon>
        <taxon>Gammaproteobacteria</taxon>
        <taxon>Enterobacterales</taxon>
        <taxon>Morganellaceae</taxon>
        <taxon>Proteus</taxon>
    </lineage>
</organism>
<evidence type="ECO:0000255" key="1">
    <source>
        <dbReference type="HAMAP-Rule" id="MF_00648"/>
    </source>
</evidence>
<protein>
    <recommendedName>
        <fullName evidence="1">Inosine/xanthosine triphosphatase</fullName>
        <shortName evidence="1">ITPase/XTPase</shortName>
        <ecNumber evidence="1">3.6.1.73</ecNumber>
    </recommendedName>
    <alternativeName>
        <fullName evidence="1">Non-canonical purine NTP phosphatase</fullName>
    </alternativeName>
    <alternativeName>
        <fullName evidence="1">Non-standard purine NTP phosphatase</fullName>
    </alternativeName>
    <alternativeName>
        <fullName evidence="1">Nucleoside-triphosphate phosphatase</fullName>
        <shortName evidence="1">NTPase</shortName>
    </alternativeName>
</protein>
<proteinExistence type="inferred from homology"/>
<feature type="chain" id="PRO_1000130941" description="Inosine/xanthosine triphosphatase">
    <location>
        <begin position="1"/>
        <end position="179"/>
    </location>
</feature>
<feature type="binding site" evidence="1">
    <location>
        <begin position="8"/>
        <end position="13"/>
    </location>
    <ligand>
        <name>substrate</name>
    </ligand>
</feature>
<feature type="binding site" evidence="1">
    <location>
        <position position="38"/>
    </location>
    <ligand>
        <name>Mg(2+)</name>
        <dbReference type="ChEBI" id="CHEBI:18420"/>
    </ligand>
</feature>
<feature type="binding site" evidence="1">
    <location>
        <begin position="68"/>
        <end position="69"/>
    </location>
    <ligand>
        <name>substrate</name>
    </ligand>
</feature>
<feature type="binding site" evidence="1">
    <location>
        <position position="68"/>
    </location>
    <ligand>
        <name>Mg(2+)</name>
        <dbReference type="ChEBI" id="CHEBI:18420"/>
    </ligand>
</feature>
<sequence length="179" mass="20078">MYHVIAATTNPAKINAIKLAFEQVFGKDTFDIEDINVDSRVPQQPIGNTETRTGARQRVMAARQVRPEADFWVGVEAGIEDDMTFAWIVIEHEQIRGESRSASLMLPEQILKGVREGRELGDEMAFLTKIDNIKQKGGAIGYFTDGLLSRTSVYQQAIVLALVPVTHDIYKQLNKKDDE</sequence>
<gene>
    <name type="ordered locus">PMI3715</name>
</gene>
<reference key="1">
    <citation type="journal article" date="2008" name="J. Bacteriol.">
        <title>Complete genome sequence of uropathogenic Proteus mirabilis, a master of both adherence and motility.</title>
        <authorList>
            <person name="Pearson M.M."/>
            <person name="Sebaihia M."/>
            <person name="Churcher C."/>
            <person name="Quail M.A."/>
            <person name="Seshasayee A.S."/>
            <person name="Luscombe N.M."/>
            <person name="Abdellah Z."/>
            <person name="Arrosmith C."/>
            <person name="Atkin B."/>
            <person name="Chillingworth T."/>
            <person name="Hauser H."/>
            <person name="Jagels K."/>
            <person name="Moule S."/>
            <person name="Mungall K."/>
            <person name="Norbertczak H."/>
            <person name="Rabbinowitsch E."/>
            <person name="Walker D."/>
            <person name="Whithead S."/>
            <person name="Thomson N.R."/>
            <person name="Rather P.N."/>
            <person name="Parkhill J."/>
            <person name="Mobley H.L.T."/>
        </authorList>
    </citation>
    <scope>NUCLEOTIDE SEQUENCE [LARGE SCALE GENOMIC DNA]</scope>
    <source>
        <strain>HI4320</strain>
    </source>
</reference>
<name>NCPP_PROMH</name>
<dbReference type="EC" id="3.6.1.73" evidence="1"/>
<dbReference type="EMBL" id="AM942759">
    <property type="protein sequence ID" value="CAR47241.1"/>
    <property type="molecule type" value="Genomic_DNA"/>
</dbReference>
<dbReference type="SMR" id="B4EY51"/>
<dbReference type="EnsemblBacteria" id="CAR47241">
    <property type="protein sequence ID" value="CAR47241"/>
    <property type="gene ID" value="PMI3715"/>
</dbReference>
<dbReference type="GeneID" id="6802844"/>
<dbReference type="KEGG" id="pmr:PMI3715"/>
<dbReference type="eggNOG" id="COG1986">
    <property type="taxonomic scope" value="Bacteria"/>
</dbReference>
<dbReference type="HOGENOM" id="CLU_087417_1_0_6"/>
<dbReference type="Proteomes" id="UP000008319">
    <property type="component" value="Chromosome"/>
</dbReference>
<dbReference type="GO" id="GO:0103023">
    <property type="term" value="F:ITPase activity"/>
    <property type="evidence" value="ECO:0007669"/>
    <property type="project" value="UniProtKB-EC"/>
</dbReference>
<dbReference type="GO" id="GO:0046872">
    <property type="term" value="F:metal ion binding"/>
    <property type="evidence" value="ECO:0007669"/>
    <property type="project" value="UniProtKB-KW"/>
</dbReference>
<dbReference type="GO" id="GO:0000166">
    <property type="term" value="F:nucleotide binding"/>
    <property type="evidence" value="ECO:0007669"/>
    <property type="project" value="UniProtKB-KW"/>
</dbReference>
<dbReference type="GO" id="GO:0017111">
    <property type="term" value="F:ribonucleoside triphosphate phosphatase activity"/>
    <property type="evidence" value="ECO:0000250"/>
    <property type="project" value="UniProtKB"/>
</dbReference>
<dbReference type="GO" id="GO:0009117">
    <property type="term" value="P:nucleotide metabolic process"/>
    <property type="evidence" value="ECO:0007669"/>
    <property type="project" value="UniProtKB-KW"/>
</dbReference>
<dbReference type="GO" id="GO:0006772">
    <property type="term" value="P:thiamine metabolic process"/>
    <property type="evidence" value="ECO:0007669"/>
    <property type="project" value="TreeGrafter"/>
</dbReference>
<dbReference type="FunFam" id="3.90.950.10:FF:000002">
    <property type="entry name" value="Inosine/xanthosine triphosphatase"/>
    <property type="match status" value="1"/>
</dbReference>
<dbReference type="Gene3D" id="3.90.950.10">
    <property type="match status" value="1"/>
</dbReference>
<dbReference type="HAMAP" id="MF_00648">
    <property type="entry name" value="Non_canon_purine_NTPase_YjjX"/>
    <property type="match status" value="1"/>
</dbReference>
<dbReference type="InterPro" id="IPR029001">
    <property type="entry name" value="ITPase-like_fam"/>
</dbReference>
<dbReference type="InterPro" id="IPR002786">
    <property type="entry name" value="Non_canon_purine_NTPase"/>
</dbReference>
<dbReference type="InterPro" id="IPR026533">
    <property type="entry name" value="NTPase/PRRC1"/>
</dbReference>
<dbReference type="InterPro" id="IPR050299">
    <property type="entry name" value="YjjX_NTPase"/>
</dbReference>
<dbReference type="NCBIfam" id="TIGR00258">
    <property type="entry name" value="inosine/xanthosine triphosphatase"/>
    <property type="match status" value="1"/>
</dbReference>
<dbReference type="NCBIfam" id="NF003459">
    <property type="entry name" value="PRK05074.1"/>
    <property type="match status" value="1"/>
</dbReference>
<dbReference type="PANTHER" id="PTHR34699">
    <property type="match status" value="1"/>
</dbReference>
<dbReference type="PANTHER" id="PTHR34699:SF2">
    <property type="entry name" value="NON-CANONICAL PURINE NTP PHOSPHATASE_PRRC1 DOMAIN-CONTAINING PROTEIN"/>
    <property type="match status" value="1"/>
</dbReference>
<dbReference type="Pfam" id="PF01931">
    <property type="entry name" value="NTPase_I-T"/>
    <property type="match status" value="1"/>
</dbReference>
<dbReference type="SUPFAM" id="SSF52972">
    <property type="entry name" value="ITPase-like"/>
    <property type="match status" value="1"/>
</dbReference>